<name>TENN_HUMAN</name>
<comment type="function">
    <text evidence="1 2 8 9">Extracellular matrix protein that seems to be a ligand for ITGA8:ITGB1, ITGAV:ITGB1 and ITGA4:ITGB1 (By similarity) (PubMed:17909022). Involved in neurite outgrowth and cell migration in hippocampal explants (By similarity). During endochondral bone formation, inhibits proliferation and differentiation of proteoblasts mediated by canonical WNT signaling (By similarity). In tumors, stimulates angiogenesis by elongation, migration and sprouting of endothelial cells (PubMed:19884327). Expressed in most mammary tumors, may facilitate tumorigenesis by supporting the migratory behavior of breast cancer cells (PubMed:17909022).</text>
</comment>
<comment type="subunit">
    <text evidence="2">Homohexamer.</text>
</comment>
<comment type="subcellular location">
    <subcellularLocation>
        <location evidence="9">Secreted</location>
        <location evidence="9">Extracellular space</location>
        <location evidence="9">Extracellular matrix</location>
    </subcellularLocation>
</comment>
<comment type="tissue specificity">
    <text evidence="8 9">Not detected in normal adult mammary tissues or brain but expressed in most breast tumors and brain tumors, such as glioblastomas, astrocytomas and oligodendrogliomas, tested (PubMed:17909022, PubMed:19884327). In brain tumors, detected around the endothelial cell layer of the clood vessels (PubMed:19884327).</text>
</comment>
<comment type="similarity">
    <text evidence="11">Belongs to the tenascin family.</text>
</comment>
<comment type="online information" name="Atlas of Genetics and Cytogenetics in Oncology and Haematology">
    <link uri="https://atlasgeneticsoncology.org/gene/44209/TNN"/>
</comment>
<gene>
    <name evidence="13" type="primary">TNN</name>
    <name evidence="10" type="synonym">TNW</name>
</gene>
<sequence length="1299" mass="144034">MSLQEMFRFPMGLLLGSVLLVASAPATLEPPGCSNKEQQVTVSHTYKIDVPKSALVQVDADPQPLSDDGASLLALGEAREEQNIIFRHNIRLQTPQKDCELAGSVQDLLARVKKLEEEMVEMKEQCSAQRCCQGVTDLSRHCSGHGTFSLETCSCHCEEGREGPACERLACPGACSGHGRCVDGRCLCHEPYVGADCGYPACPENCSGHGECVRGVCQCHEDFMSEDCSEKRCPGDCSGHGFCDTGECYCEEGFTGLDCAQVVTPQGLQLLKNTEDSLLVSWEPSSQVDHYLLSYYPLGKELSGKQIQVPKEQHSYEILGLLPGTKYIVTLRNVKNEVSSSPQHLLATTDLAVLGTAWVTDETENSLDVEWENPSTEVDYYKLRYGPMTGQEVAEVTVPKSSDPKSRYDITGLHPGTEYKITVVPMRGELEGKPILLNGRTEIDSPTNVVTDRVTEDTATVSWDPVQAVIDKYVVRYTSADGDTKEMAVHKDESSTVLTGLKPGEAYKVYVWAERGNQGSKKADTNALTEIDSPANLVTDRVTENTATISWDPVQATIDKYVVRYTSADDQETREVLVGKEQSSTVLTGLRPGVEYTVHVWAQKGDRESKKADTNAPTDIDSPKNLVTDRVTENMATVSWDPVQAAIDKYVVRYTSAGGETREVPVGKEQSSTVLTGLRPGMEYMVHVWAQKGDQESKKADTKAQTDIDSPQNLVTDRVTENMATVSWDPVRATIDRYVVRYTSAKDGETREVPVGKEQSSTVLTGLRPGVEYTVHVWAQKGAQESKKADTKAQTDIDSPQNLVTDWVTENTATVSWDPVQATIDRYVVHYTSANGETREVPVGKEQSSTVLTGLRPGMEYTVHVWAQKGNQESKKADTKAQTEIDGPKNLVTDWVTENMATVSWDPVQATIDKYMVRYTSADGETREVPVGKEHSSTVLTGLRPGMEYMVHVWAQKGAQESKKADTKAQTELDPPRNLRPSAVTQSGGILTWTPPSAQIHGYILTYQFPDGTVKEMQLGREDQRFALQGLEQGATYPVSLVAFKGGRRSRNVSTTLSTVGARFPHPSDCSQVQQNSNAASGLYTIYLHGDASRPLQVYCDMETDGGGWIVFQRRNTGQLDFFKRWRSYVEGFGDPMKEFWLGLDKLHNLTTGTPARYEVRVDLQTANESAYAIYDFFQVASSKERYKLTVGKYRGTAGDALTYHNGWKFTTFDRDNDIALSNCALTHHGGWWYKNCHLANPNGRYGETKHSEGVNWEPWKGHEFSIPYVELKIRPHGYSREPVLGRKKRTLRGRLRTF</sequence>
<feature type="signal peptide" evidence="3">
    <location>
        <begin position="1"/>
        <end position="28"/>
    </location>
</feature>
<feature type="chain" id="PRO_0000007745" description="Tenascin-N">
    <location>
        <begin position="29"/>
        <end position="1299"/>
    </location>
</feature>
<feature type="domain" description="EGF-like 1">
    <location>
        <begin position="167"/>
        <end position="198"/>
    </location>
</feature>
<feature type="domain" description="EGF-like 2">
    <location>
        <begin position="199"/>
        <end position="229"/>
    </location>
</feature>
<feature type="domain" description="EGF-like 3">
    <location>
        <begin position="230"/>
        <end position="260"/>
    </location>
</feature>
<feature type="domain" description="Fibronectin type-III 1" evidence="4">
    <location>
        <begin position="264"/>
        <end position="352"/>
    </location>
</feature>
<feature type="domain" description="Fibronectin type-III 2" evidence="4">
    <location>
        <begin position="353"/>
        <end position="444"/>
    </location>
</feature>
<feature type="domain" description="Fibronectin type-III 3" evidence="4">
    <location>
        <begin position="445"/>
        <end position="532"/>
    </location>
</feature>
<feature type="domain" description="Fibronectin type-III 4" evidence="4">
    <location>
        <begin position="533"/>
        <end position="623"/>
    </location>
</feature>
<feature type="domain" description="Fibronectin type-III 5" evidence="4">
    <location>
        <begin position="624"/>
        <end position="709"/>
    </location>
</feature>
<feature type="domain" description="Fibronectin type-III 6" evidence="4">
    <location>
        <begin position="710"/>
        <end position="800"/>
    </location>
</feature>
<feature type="domain" description="Fibronectin type-III 7" evidence="4">
    <location>
        <begin position="801"/>
        <end position="886"/>
    </location>
</feature>
<feature type="domain" description="Fibronectin type-III 8" evidence="4">
    <location>
        <begin position="887"/>
        <end position="976"/>
    </location>
</feature>
<feature type="domain" description="Fibronectin type-III 9" evidence="4">
    <location>
        <begin position="977"/>
        <end position="1063"/>
    </location>
</feature>
<feature type="domain" description="Fibrinogen C-terminal" evidence="5">
    <location>
        <begin position="1061"/>
        <end position="1278"/>
    </location>
</feature>
<feature type="region of interest" description="Disordered" evidence="6">
    <location>
        <begin position="605"/>
        <end position="624"/>
    </location>
</feature>
<feature type="region of interest" description="Disordered" evidence="6">
    <location>
        <begin position="960"/>
        <end position="982"/>
    </location>
</feature>
<feature type="compositionally biased region" description="Basic and acidic residues" evidence="6">
    <location>
        <begin position="960"/>
        <end position="977"/>
    </location>
</feature>
<feature type="glycosylation site" description="N-linked (GlcNAc...) asparagine" evidence="7">
    <location>
        <position position="1149"/>
    </location>
</feature>
<feature type="disulfide bond" evidence="5">
    <location>
        <begin position="171"/>
        <end position="181"/>
    </location>
</feature>
<feature type="disulfide bond" evidence="5">
    <location>
        <begin position="175"/>
        <end position="186"/>
    </location>
</feature>
<feature type="disulfide bond" evidence="5">
    <location>
        <begin position="188"/>
        <end position="197"/>
    </location>
</feature>
<feature type="disulfide bond" evidence="5">
    <location>
        <begin position="202"/>
        <end position="212"/>
    </location>
</feature>
<feature type="disulfide bond" evidence="5">
    <location>
        <begin position="206"/>
        <end position="217"/>
    </location>
</feature>
<feature type="disulfide bond" evidence="5">
    <location>
        <begin position="219"/>
        <end position="228"/>
    </location>
</feature>
<feature type="disulfide bond" evidence="5">
    <location>
        <begin position="233"/>
        <end position="243"/>
    </location>
</feature>
<feature type="disulfide bond" evidence="5">
    <location>
        <begin position="237"/>
        <end position="248"/>
    </location>
</feature>
<feature type="disulfide bond" evidence="5">
    <location>
        <begin position="250"/>
        <end position="259"/>
    </location>
</feature>
<feature type="sequence variant" id="VAR_049007" description="In dbSNP:rs2072032.">
    <original>R</original>
    <variation>G</variation>
    <location>
        <position position="79"/>
    </location>
</feature>
<feature type="sequence variant" id="VAR_033832" description="In dbSNP:rs16847812.">
    <original>D</original>
    <variation>N</variation>
    <location>
        <position position="289"/>
    </location>
</feature>
<feature type="sequence variant" id="VAR_049008" description="In dbSNP:rs6664276.">
    <original>R</original>
    <variation>S</variation>
    <location>
        <position position="440"/>
    </location>
</feature>
<feature type="sequence variant" id="VAR_033833" description="In dbSNP:rs17374761.">
    <original>T</original>
    <variation>M</variation>
    <location>
        <position position="499"/>
    </location>
</feature>
<feature type="sequence variant" id="VAR_033834" description="In dbSNP:rs6696455.">
    <original>W</original>
    <variation>R</variation>
    <location>
        <position position="807"/>
    </location>
</feature>
<feature type="sequence variant" id="VAR_059275" description="In dbSNP:rs6694078.">
    <original>M</original>
    <variation>V</variation>
    <location>
        <position position="859"/>
    </location>
</feature>
<feature type="sequence variant" id="VAR_024269" description="In dbSNP:rs2285215.">
    <original>P</original>
    <variation>L</variation>
    <location>
        <position position="930"/>
    </location>
</feature>
<feature type="sequence variant" id="VAR_033835" description="In dbSNP:rs10798333.">
    <original>T</original>
    <variation>M</variation>
    <location>
        <position position="941"/>
    </location>
</feature>
<feature type="sequence variant" id="VAR_049009" description="In dbSNP:rs10158841.">
    <original>D</original>
    <variation>E</variation>
    <location>
        <position position="1135"/>
    </location>
</feature>
<feature type="sequence variant" id="VAR_049010" description="In dbSNP:rs2072036.">
    <original>A</original>
    <variation>V</variation>
    <location>
        <position position="1156"/>
    </location>
</feature>
<protein>
    <recommendedName>
        <fullName evidence="13">Tenascin-N</fullName>
        <shortName>TN-N</shortName>
    </recommendedName>
    <alternativeName>
        <fullName evidence="10">Tenascin-W</fullName>
        <shortName>TN-W</shortName>
    </alternativeName>
</protein>
<proteinExistence type="evidence at protein level"/>
<keyword id="KW-1015">Disulfide bond</keyword>
<keyword id="KW-0245">EGF-like domain</keyword>
<keyword id="KW-0272">Extracellular matrix</keyword>
<keyword id="KW-0325">Glycoprotein</keyword>
<keyword id="KW-1267">Proteomics identification</keyword>
<keyword id="KW-1185">Reference proteome</keyword>
<keyword id="KW-0677">Repeat</keyword>
<keyword id="KW-0964">Secreted</keyword>
<keyword id="KW-0732">Signal</keyword>
<dbReference type="EMBL" id="Z99297">
    <property type="status" value="NOT_ANNOTATED_CDS"/>
    <property type="molecule type" value="Genomic_DNA"/>
</dbReference>
<dbReference type="EMBL" id="Z99715">
    <property type="status" value="NOT_ANNOTATED_CDS"/>
    <property type="molecule type" value="Genomic_DNA"/>
</dbReference>
<dbReference type="EMBL" id="BC136619">
    <property type="protein sequence ID" value="AAI36620.1"/>
    <property type="molecule type" value="mRNA"/>
</dbReference>
<dbReference type="EMBL" id="AL049689">
    <property type="protein sequence ID" value="CAB41260.1"/>
    <property type="molecule type" value="mRNA"/>
</dbReference>
<dbReference type="CCDS" id="CCDS30943.1"/>
<dbReference type="RefSeq" id="NP_071376.1">
    <property type="nucleotide sequence ID" value="NM_022093.2"/>
</dbReference>
<dbReference type="SMR" id="Q9UQP3"/>
<dbReference type="BioGRID" id="121992">
    <property type="interactions" value="22"/>
</dbReference>
<dbReference type="ComplexPortal" id="CPX-1012">
    <property type="entry name" value="Tenascin-W complex"/>
</dbReference>
<dbReference type="FunCoup" id="Q9UQP3">
    <property type="interactions" value="483"/>
</dbReference>
<dbReference type="IntAct" id="Q9UQP3">
    <property type="interactions" value="1"/>
</dbReference>
<dbReference type="STRING" id="9606.ENSP00000239462"/>
<dbReference type="GlyConnect" id="1793">
    <property type="glycosylation" value="11 N-Linked glycans (3 sites)"/>
</dbReference>
<dbReference type="GlyCosmos" id="Q9UQP3">
    <property type="glycosylation" value="4 sites, 13 glycans"/>
</dbReference>
<dbReference type="GlyGen" id="Q9UQP3">
    <property type="glycosylation" value="4 sites, 14 N-linked glycans (3 sites), 1 O-linked glycan (1 site)"/>
</dbReference>
<dbReference type="iPTMnet" id="Q9UQP3"/>
<dbReference type="PhosphoSitePlus" id="Q9UQP3"/>
<dbReference type="BioMuta" id="TNN"/>
<dbReference type="DMDM" id="81175198"/>
<dbReference type="jPOST" id="Q9UQP3"/>
<dbReference type="MassIVE" id="Q9UQP3"/>
<dbReference type="PaxDb" id="9606-ENSP00000239462"/>
<dbReference type="PeptideAtlas" id="Q9UQP3"/>
<dbReference type="ProteomicsDB" id="85562"/>
<dbReference type="ABCD" id="Q9UQP3">
    <property type="antibodies" value="3 sequenced antibodies"/>
</dbReference>
<dbReference type="Antibodypedia" id="4397">
    <property type="antibodies" value="108 antibodies from 27 providers"/>
</dbReference>
<dbReference type="DNASU" id="63923"/>
<dbReference type="Ensembl" id="ENST00000239462.9">
    <property type="protein sequence ID" value="ENSP00000239462.4"/>
    <property type="gene ID" value="ENSG00000120332.17"/>
</dbReference>
<dbReference type="GeneID" id="63923"/>
<dbReference type="KEGG" id="hsa:63923"/>
<dbReference type="MANE-Select" id="ENST00000239462.9">
    <property type="protein sequence ID" value="ENSP00000239462.4"/>
    <property type="RefSeq nucleotide sequence ID" value="NM_022093.2"/>
    <property type="RefSeq protein sequence ID" value="NP_071376.1"/>
</dbReference>
<dbReference type="UCSC" id="uc001gkl.1">
    <property type="organism name" value="human"/>
</dbReference>
<dbReference type="AGR" id="HGNC:22942"/>
<dbReference type="CTD" id="63923"/>
<dbReference type="DisGeNET" id="63923"/>
<dbReference type="GeneCards" id="TNN"/>
<dbReference type="HGNC" id="HGNC:22942">
    <property type="gene designation" value="TNN"/>
</dbReference>
<dbReference type="HPA" id="ENSG00000120332">
    <property type="expression patterns" value="Tissue enhanced (adipose tissue, breast)"/>
</dbReference>
<dbReference type="MalaCards" id="TNN"/>
<dbReference type="MIM" id="617472">
    <property type="type" value="gene"/>
</dbReference>
<dbReference type="neXtProt" id="NX_Q9UQP3"/>
<dbReference type="OpenTargets" id="ENSG00000120332"/>
<dbReference type="PharmGKB" id="PA134973710"/>
<dbReference type="VEuPathDB" id="HostDB:ENSG00000120332"/>
<dbReference type="eggNOG" id="KOG1225">
    <property type="taxonomic scope" value="Eukaryota"/>
</dbReference>
<dbReference type="eggNOG" id="KOG2579">
    <property type="taxonomic scope" value="Eukaryota"/>
</dbReference>
<dbReference type="GeneTree" id="ENSGT00940000160553"/>
<dbReference type="InParanoid" id="Q9UQP3"/>
<dbReference type="OMA" id="EAPIDRY"/>
<dbReference type="OrthoDB" id="2154780at2759"/>
<dbReference type="PAN-GO" id="Q9UQP3">
    <property type="GO annotations" value="5 GO annotations based on evolutionary models"/>
</dbReference>
<dbReference type="PhylomeDB" id="Q9UQP3"/>
<dbReference type="TreeFam" id="TF329915"/>
<dbReference type="PathwayCommons" id="Q9UQP3"/>
<dbReference type="Reactome" id="R-HSA-3000178">
    <property type="pathway name" value="ECM proteoglycans"/>
</dbReference>
<dbReference type="SignaLink" id="Q9UQP3"/>
<dbReference type="BioGRID-ORCS" id="63923">
    <property type="hits" value="10 hits in 1148 CRISPR screens"/>
</dbReference>
<dbReference type="ChiTaRS" id="TNN">
    <property type="organism name" value="human"/>
</dbReference>
<dbReference type="GenomeRNAi" id="63923"/>
<dbReference type="Pharos" id="Q9UQP3">
    <property type="development level" value="Tbio"/>
</dbReference>
<dbReference type="PRO" id="PR:Q9UQP3"/>
<dbReference type="Proteomes" id="UP000005640">
    <property type="component" value="Chromosome 1"/>
</dbReference>
<dbReference type="RNAct" id="Q9UQP3">
    <property type="molecule type" value="protein"/>
</dbReference>
<dbReference type="Bgee" id="ENSG00000120332">
    <property type="expression patterns" value="Expressed in periodontal ligament and 80 other cell types or tissues"/>
</dbReference>
<dbReference type="ExpressionAtlas" id="Q9UQP3">
    <property type="expression patterns" value="baseline and differential"/>
</dbReference>
<dbReference type="GO" id="GO:0097442">
    <property type="term" value="C:CA3 pyramidal cell dendrite"/>
    <property type="evidence" value="ECO:0007669"/>
    <property type="project" value="Ensembl"/>
</dbReference>
<dbReference type="GO" id="GO:0009986">
    <property type="term" value="C:cell surface"/>
    <property type="evidence" value="ECO:0007669"/>
    <property type="project" value="Ensembl"/>
</dbReference>
<dbReference type="GO" id="GO:0062023">
    <property type="term" value="C:collagen-containing extracellular matrix"/>
    <property type="evidence" value="ECO:0000318"/>
    <property type="project" value="GO_Central"/>
</dbReference>
<dbReference type="GO" id="GO:0005615">
    <property type="term" value="C:extracellular space"/>
    <property type="evidence" value="ECO:0000318"/>
    <property type="project" value="GO_Central"/>
</dbReference>
<dbReference type="GO" id="GO:1990026">
    <property type="term" value="C:hippocampal mossy fiber expansion"/>
    <property type="evidence" value="ECO:0007669"/>
    <property type="project" value="Ensembl"/>
</dbReference>
<dbReference type="GO" id="GO:0043025">
    <property type="term" value="C:neuronal cell body"/>
    <property type="evidence" value="ECO:0007669"/>
    <property type="project" value="Ensembl"/>
</dbReference>
<dbReference type="GO" id="GO:0090733">
    <property type="term" value="C:tenascin complex"/>
    <property type="evidence" value="ECO:0000353"/>
    <property type="project" value="ComplexPortal"/>
</dbReference>
<dbReference type="GO" id="GO:0042802">
    <property type="term" value="F:identical protein binding"/>
    <property type="evidence" value="ECO:0007669"/>
    <property type="project" value="Ensembl"/>
</dbReference>
<dbReference type="GO" id="GO:0005178">
    <property type="term" value="F:integrin binding"/>
    <property type="evidence" value="ECO:0000318"/>
    <property type="project" value="GO_Central"/>
</dbReference>
<dbReference type="GO" id="GO:0007409">
    <property type="term" value="P:axonogenesis"/>
    <property type="evidence" value="ECO:0007669"/>
    <property type="project" value="Ensembl"/>
</dbReference>
<dbReference type="GO" id="GO:0007160">
    <property type="term" value="P:cell-matrix adhesion"/>
    <property type="evidence" value="ECO:0000318"/>
    <property type="project" value="GO_Central"/>
</dbReference>
<dbReference type="GO" id="GO:0070593">
    <property type="term" value="P:dendrite self-avoidance"/>
    <property type="evidence" value="ECO:0000247"/>
    <property type="project" value="UniProtKB"/>
</dbReference>
<dbReference type="GO" id="GO:2001223">
    <property type="term" value="P:negative regulation of neuron migration"/>
    <property type="evidence" value="ECO:0000247"/>
    <property type="project" value="UniProtKB"/>
</dbReference>
<dbReference type="GO" id="GO:1990138">
    <property type="term" value="P:neuron projection extension"/>
    <property type="evidence" value="ECO:0000318"/>
    <property type="project" value="GO_Central"/>
</dbReference>
<dbReference type="GO" id="GO:0002076">
    <property type="term" value="P:osteoblast development"/>
    <property type="evidence" value="ECO:0007669"/>
    <property type="project" value="Ensembl"/>
</dbReference>
<dbReference type="GO" id="GO:0010976">
    <property type="term" value="P:positive regulation of neuron projection development"/>
    <property type="evidence" value="ECO:0000266"/>
    <property type="project" value="ComplexPortal"/>
</dbReference>
<dbReference type="GO" id="GO:1903672">
    <property type="term" value="P:positive regulation of sprouting angiogenesis"/>
    <property type="evidence" value="ECO:0000314"/>
    <property type="project" value="ComplexPortal"/>
</dbReference>
<dbReference type="GO" id="GO:1903010">
    <property type="term" value="P:regulation of bone development"/>
    <property type="evidence" value="ECO:0000266"/>
    <property type="project" value="ComplexPortal"/>
</dbReference>
<dbReference type="GO" id="GO:0030155">
    <property type="term" value="P:regulation of cell adhesion"/>
    <property type="evidence" value="ECO:0000314"/>
    <property type="project" value="ComplexPortal"/>
</dbReference>
<dbReference type="GO" id="GO:0030334">
    <property type="term" value="P:regulation of cell migration"/>
    <property type="evidence" value="ECO:0000314"/>
    <property type="project" value="ComplexPortal"/>
</dbReference>
<dbReference type="GO" id="GO:1905899">
    <property type="term" value="P:regulation of smooth muscle tissue development"/>
    <property type="evidence" value="ECO:0000266"/>
    <property type="project" value="ComplexPortal"/>
</dbReference>
<dbReference type="CDD" id="cd00035">
    <property type="entry name" value="ChtBD1"/>
    <property type="match status" value="1"/>
</dbReference>
<dbReference type="CDD" id="cd00063">
    <property type="entry name" value="FN3"/>
    <property type="match status" value="9"/>
</dbReference>
<dbReference type="CDD" id="cd00087">
    <property type="entry name" value="FReD"/>
    <property type="match status" value="1"/>
</dbReference>
<dbReference type="FunFam" id="2.10.25.10:FF:000001">
    <property type="entry name" value="Tenascin C"/>
    <property type="match status" value="2"/>
</dbReference>
<dbReference type="FunFam" id="3.90.215.10:FF:000001">
    <property type="entry name" value="Tenascin isoform 1"/>
    <property type="match status" value="1"/>
</dbReference>
<dbReference type="FunFam" id="2.10.25.10:FF:000332">
    <property type="entry name" value="Tenascin N"/>
    <property type="match status" value="1"/>
</dbReference>
<dbReference type="FunFam" id="2.60.40.10:FF:000156">
    <property type="entry name" value="Tenascin N"/>
    <property type="match status" value="6"/>
</dbReference>
<dbReference type="FunFam" id="2.60.40.10:FF:000534">
    <property type="entry name" value="Tenascin N"/>
    <property type="match status" value="1"/>
</dbReference>
<dbReference type="FunFam" id="2.60.40.10:FF:000783">
    <property type="entry name" value="Tenascin N"/>
    <property type="match status" value="1"/>
</dbReference>
<dbReference type="Gene3D" id="3.90.215.10">
    <property type="entry name" value="Gamma Fibrinogen, chain A, domain 1"/>
    <property type="match status" value="1"/>
</dbReference>
<dbReference type="Gene3D" id="2.60.40.10">
    <property type="entry name" value="Immunoglobulins"/>
    <property type="match status" value="9"/>
</dbReference>
<dbReference type="Gene3D" id="2.10.25.10">
    <property type="entry name" value="Laminin"/>
    <property type="match status" value="3"/>
</dbReference>
<dbReference type="InterPro" id="IPR050991">
    <property type="entry name" value="ECM_Regulatory_Proteins"/>
</dbReference>
<dbReference type="InterPro" id="IPR000742">
    <property type="entry name" value="EGF-like_dom"/>
</dbReference>
<dbReference type="InterPro" id="IPR036056">
    <property type="entry name" value="Fibrinogen-like_C"/>
</dbReference>
<dbReference type="InterPro" id="IPR014716">
    <property type="entry name" value="Fibrinogen_a/b/g_C_1"/>
</dbReference>
<dbReference type="InterPro" id="IPR002181">
    <property type="entry name" value="Fibrinogen_a/b/g_C_dom"/>
</dbReference>
<dbReference type="InterPro" id="IPR020837">
    <property type="entry name" value="Fibrinogen_CS"/>
</dbReference>
<dbReference type="InterPro" id="IPR003961">
    <property type="entry name" value="FN3_dom"/>
</dbReference>
<dbReference type="InterPro" id="IPR036116">
    <property type="entry name" value="FN3_sf"/>
</dbReference>
<dbReference type="InterPro" id="IPR013783">
    <property type="entry name" value="Ig-like_fold"/>
</dbReference>
<dbReference type="NCBIfam" id="NF040941">
    <property type="entry name" value="GGGWT_bact"/>
    <property type="match status" value="1"/>
</dbReference>
<dbReference type="PANTHER" id="PTHR46708">
    <property type="entry name" value="TENASCIN"/>
    <property type="match status" value="1"/>
</dbReference>
<dbReference type="PANTHER" id="PTHR46708:SF12">
    <property type="entry name" value="TENASCIN N"/>
    <property type="match status" value="1"/>
</dbReference>
<dbReference type="Pfam" id="PF23106">
    <property type="entry name" value="EGF_Teneurin"/>
    <property type="match status" value="2"/>
</dbReference>
<dbReference type="Pfam" id="PF00147">
    <property type="entry name" value="Fibrinogen_C"/>
    <property type="match status" value="1"/>
</dbReference>
<dbReference type="Pfam" id="PF00041">
    <property type="entry name" value="fn3"/>
    <property type="match status" value="9"/>
</dbReference>
<dbReference type="SMART" id="SM00181">
    <property type="entry name" value="EGF"/>
    <property type="match status" value="3"/>
</dbReference>
<dbReference type="SMART" id="SM00186">
    <property type="entry name" value="FBG"/>
    <property type="match status" value="1"/>
</dbReference>
<dbReference type="SMART" id="SM00060">
    <property type="entry name" value="FN3"/>
    <property type="match status" value="9"/>
</dbReference>
<dbReference type="SUPFAM" id="SSF56496">
    <property type="entry name" value="Fibrinogen C-terminal domain-like"/>
    <property type="match status" value="1"/>
</dbReference>
<dbReference type="SUPFAM" id="SSF49265">
    <property type="entry name" value="Fibronectin type III"/>
    <property type="match status" value="5"/>
</dbReference>
<dbReference type="PROSITE" id="PS00022">
    <property type="entry name" value="EGF_1"/>
    <property type="match status" value="3"/>
</dbReference>
<dbReference type="PROSITE" id="PS01186">
    <property type="entry name" value="EGF_2"/>
    <property type="match status" value="2"/>
</dbReference>
<dbReference type="PROSITE" id="PS00514">
    <property type="entry name" value="FIBRINOGEN_C_1"/>
    <property type="match status" value="1"/>
</dbReference>
<dbReference type="PROSITE" id="PS51406">
    <property type="entry name" value="FIBRINOGEN_C_2"/>
    <property type="match status" value="1"/>
</dbReference>
<dbReference type="PROSITE" id="PS50853">
    <property type="entry name" value="FN3"/>
    <property type="match status" value="9"/>
</dbReference>
<organism evidence="12">
    <name type="scientific">Homo sapiens</name>
    <name type="common">Human</name>
    <dbReference type="NCBI Taxonomy" id="9606"/>
    <lineage>
        <taxon>Eukaryota</taxon>
        <taxon>Metazoa</taxon>
        <taxon>Chordata</taxon>
        <taxon>Craniata</taxon>
        <taxon>Vertebrata</taxon>
        <taxon>Euteleostomi</taxon>
        <taxon>Mammalia</taxon>
        <taxon>Eutheria</taxon>
        <taxon>Euarchontoglires</taxon>
        <taxon>Primates</taxon>
        <taxon>Haplorrhini</taxon>
        <taxon>Catarrhini</taxon>
        <taxon>Hominidae</taxon>
        <taxon>Homo</taxon>
    </lineage>
</organism>
<accession>Q9UQP3</accession>
<accession>A0A0A6YY94</accession>
<accession>B9EGP3</accession>
<accession>Q5R360</accession>
<evidence type="ECO:0000250" key="1">
    <source>
        <dbReference type="UniProtKB" id="Q80YX1"/>
    </source>
</evidence>
<evidence type="ECO:0000250" key="2">
    <source>
        <dbReference type="UniProtKB" id="Q80Z71"/>
    </source>
</evidence>
<evidence type="ECO:0000255" key="3"/>
<evidence type="ECO:0000255" key="4">
    <source>
        <dbReference type="PROSITE-ProRule" id="PRU00316"/>
    </source>
</evidence>
<evidence type="ECO:0000255" key="5">
    <source>
        <dbReference type="PROSITE-ProRule" id="PRU00739"/>
    </source>
</evidence>
<evidence type="ECO:0000256" key="6">
    <source>
        <dbReference type="SAM" id="MobiDB-lite"/>
    </source>
</evidence>
<evidence type="ECO:0000269" key="7">
    <source>
    </source>
</evidence>
<evidence type="ECO:0000269" key="8">
    <source>
    </source>
</evidence>
<evidence type="ECO:0000269" key="9">
    <source>
    </source>
</evidence>
<evidence type="ECO:0000303" key="10">
    <source>
    </source>
</evidence>
<evidence type="ECO:0000305" key="11"/>
<evidence type="ECO:0000312" key="12">
    <source>
        <dbReference type="EMBL" id="CAB41260.1"/>
    </source>
</evidence>
<evidence type="ECO:0000312" key="13">
    <source>
        <dbReference type="HGNC" id="HGNC:22942"/>
    </source>
</evidence>
<reference key="1">
    <citation type="journal article" date="2006" name="Nature">
        <title>The DNA sequence and biological annotation of human chromosome 1.</title>
        <authorList>
            <person name="Gregory S.G."/>
            <person name="Barlow K.F."/>
            <person name="McLay K.E."/>
            <person name="Kaul R."/>
            <person name="Swarbreck D."/>
            <person name="Dunham A."/>
            <person name="Scott C.E."/>
            <person name="Howe K.L."/>
            <person name="Woodfine K."/>
            <person name="Spencer C.C.A."/>
            <person name="Jones M.C."/>
            <person name="Gillson C."/>
            <person name="Searle S."/>
            <person name="Zhou Y."/>
            <person name="Kokocinski F."/>
            <person name="McDonald L."/>
            <person name="Evans R."/>
            <person name="Phillips K."/>
            <person name="Atkinson A."/>
            <person name="Cooper R."/>
            <person name="Jones C."/>
            <person name="Hall R.E."/>
            <person name="Andrews T.D."/>
            <person name="Lloyd C."/>
            <person name="Ainscough R."/>
            <person name="Almeida J.P."/>
            <person name="Ambrose K.D."/>
            <person name="Anderson F."/>
            <person name="Andrew R.W."/>
            <person name="Ashwell R.I.S."/>
            <person name="Aubin K."/>
            <person name="Babbage A.K."/>
            <person name="Bagguley C.L."/>
            <person name="Bailey J."/>
            <person name="Beasley H."/>
            <person name="Bethel G."/>
            <person name="Bird C.P."/>
            <person name="Bray-Allen S."/>
            <person name="Brown J.Y."/>
            <person name="Brown A.J."/>
            <person name="Buckley D."/>
            <person name="Burton J."/>
            <person name="Bye J."/>
            <person name="Carder C."/>
            <person name="Chapman J.C."/>
            <person name="Clark S.Y."/>
            <person name="Clarke G."/>
            <person name="Clee C."/>
            <person name="Cobley V."/>
            <person name="Collier R.E."/>
            <person name="Corby N."/>
            <person name="Coville G.J."/>
            <person name="Davies J."/>
            <person name="Deadman R."/>
            <person name="Dunn M."/>
            <person name="Earthrowl M."/>
            <person name="Ellington A.G."/>
            <person name="Errington H."/>
            <person name="Frankish A."/>
            <person name="Frankland J."/>
            <person name="French L."/>
            <person name="Garner P."/>
            <person name="Garnett J."/>
            <person name="Gay L."/>
            <person name="Ghori M.R.J."/>
            <person name="Gibson R."/>
            <person name="Gilby L.M."/>
            <person name="Gillett W."/>
            <person name="Glithero R.J."/>
            <person name="Grafham D.V."/>
            <person name="Griffiths C."/>
            <person name="Griffiths-Jones S."/>
            <person name="Grocock R."/>
            <person name="Hammond S."/>
            <person name="Harrison E.S.I."/>
            <person name="Hart E."/>
            <person name="Haugen E."/>
            <person name="Heath P.D."/>
            <person name="Holmes S."/>
            <person name="Holt K."/>
            <person name="Howden P.J."/>
            <person name="Hunt A.R."/>
            <person name="Hunt S.E."/>
            <person name="Hunter G."/>
            <person name="Isherwood J."/>
            <person name="James R."/>
            <person name="Johnson C."/>
            <person name="Johnson D."/>
            <person name="Joy A."/>
            <person name="Kay M."/>
            <person name="Kershaw J.K."/>
            <person name="Kibukawa M."/>
            <person name="Kimberley A.M."/>
            <person name="King A."/>
            <person name="Knights A.J."/>
            <person name="Lad H."/>
            <person name="Laird G."/>
            <person name="Lawlor S."/>
            <person name="Leongamornlert D.A."/>
            <person name="Lloyd D.M."/>
            <person name="Loveland J."/>
            <person name="Lovell J."/>
            <person name="Lush M.J."/>
            <person name="Lyne R."/>
            <person name="Martin S."/>
            <person name="Mashreghi-Mohammadi M."/>
            <person name="Matthews L."/>
            <person name="Matthews N.S.W."/>
            <person name="McLaren S."/>
            <person name="Milne S."/>
            <person name="Mistry S."/>
            <person name="Moore M.J.F."/>
            <person name="Nickerson T."/>
            <person name="O'Dell C.N."/>
            <person name="Oliver K."/>
            <person name="Palmeiri A."/>
            <person name="Palmer S.A."/>
            <person name="Parker A."/>
            <person name="Patel D."/>
            <person name="Pearce A.V."/>
            <person name="Peck A.I."/>
            <person name="Pelan S."/>
            <person name="Phelps K."/>
            <person name="Phillimore B.J."/>
            <person name="Plumb R."/>
            <person name="Rajan J."/>
            <person name="Raymond C."/>
            <person name="Rouse G."/>
            <person name="Saenphimmachak C."/>
            <person name="Sehra H.K."/>
            <person name="Sheridan E."/>
            <person name="Shownkeen R."/>
            <person name="Sims S."/>
            <person name="Skuce C.D."/>
            <person name="Smith M."/>
            <person name="Steward C."/>
            <person name="Subramanian S."/>
            <person name="Sycamore N."/>
            <person name="Tracey A."/>
            <person name="Tromans A."/>
            <person name="Van Helmond Z."/>
            <person name="Wall M."/>
            <person name="Wallis J.M."/>
            <person name="White S."/>
            <person name="Whitehead S.L."/>
            <person name="Wilkinson J.E."/>
            <person name="Willey D.L."/>
            <person name="Williams H."/>
            <person name="Wilming L."/>
            <person name="Wray P.W."/>
            <person name="Wu Z."/>
            <person name="Coulson A."/>
            <person name="Vaudin M."/>
            <person name="Sulston J.E."/>
            <person name="Durbin R.M."/>
            <person name="Hubbard T."/>
            <person name="Wooster R."/>
            <person name="Dunham I."/>
            <person name="Carter N.P."/>
            <person name="McVean G."/>
            <person name="Ross M.T."/>
            <person name="Harrow J."/>
            <person name="Olson M.V."/>
            <person name="Beck S."/>
            <person name="Rogers J."/>
            <person name="Bentley D.R."/>
        </authorList>
    </citation>
    <scope>NUCLEOTIDE SEQUENCE [LARGE SCALE GENOMIC DNA]</scope>
</reference>
<reference key="2">
    <citation type="journal article" date="2004" name="Genome Res.">
        <title>The status, quality, and expansion of the NIH full-length cDNA project: the Mammalian Gene Collection (MGC).</title>
        <authorList>
            <consortium name="The MGC Project Team"/>
        </authorList>
    </citation>
    <scope>NUCLEOTIDE SEQUENCE [LARGE SCALE MRNA]</scope>
</reference>
<reference evidence="11" key="3">
    <citation type="submission" date="1999-04" db="EMBL/GenBank/DDBJ databases">
        <authorList>
            <person name="Rhodes S."/>
        </authorList>
    </citation>
    <scope>NUCLEOTIDE SEQUENCE [LARGE SCALE MRNA] OF 6-1299</scope>
</reference>
<reference key="4">
    <citation type="journal article" date="2005" name="J. Proteome Res.">
        <title>Human plasma N-glycoproteome analysis by immunoaffinity subtraction, hydrazide chemistry, and mass spectrometry.</title>
        <authorList>
            <person name="Liu T."/>
            <person name="Qian W.-J."/>
            <person name="Gritsenko M.A."/>
            <person name="Camp D.G. II"/>
            <person name="Monroe M.E."/>
            <person name="Moore R.J."/>
            <person name="Smith R.D."/>
        </authorList>
    </citation>
    <scope>GLYCOSYLATION [LARGE SCALE ANALYSIS] AT ASN-1149</scope>
    <source>
        <tissue>Plasma</tissue>
    </source>
</reference>
<reference key="5">
    <citation type="journal article" date="2007" name="Cancer Res.">
        <title>Tenascin-W is a novel marker for activated tumor stroma in low-grade human breast cancer and influences cell behavior.</title>
        <authorList>
            <person name="Degen M."/>
            <person name="Brellier F."/>
            <person name="Kain R."/>
            <person name="Ruiz C."/>
            <person name="Terracciano L."/>
            <person name="Orend G."/>
            <person name="Chiquet-Ehrismann R."/>
        </authorList>
    </citation>
    <scope>FUNCTION</scope>
    <scope>TISSUE SPECIFICITY</scope>
</reference>
<reference key="6">
    <citation type="journal article" date="2010" name="FASEB J.">
        <title>Tenascin-W is a specific marker of glioma-associated blood vessels and stimulates angiogenesis in vitro.</title>
        <authorList>
            <person name="Martina E."/>
            <person name="Degen M."/>
            <person name="Rueegg C."/>
            <person name="Merlo A."/>
            <person name="Lino M.M."/>
            <person name="Chiquet-Ehrismann R."/>
            <person name="Brellier F."/>
        </authorList>
    </citation>
    <scope>FUNCTION</scope>
    <scope>TISSUE SPECIFICITY</scope>
    <scope>SUBCELLULAR LOCATION</scope>
</reference>